<accession>Q8FVH2</accession>
<accession>G0KDN1</accession>
<protein>
    <recommendedName>
        <fullName evidence="2">L-erythrulose-1-phosphate isomerase</fullName>
        <ecNumber evidence="2">5.3.1.33</ecNumber>
    </recommendedName>
    <alternativeName>
        <fullName evidence="2">D-3-tetrulose-4-phosphate isomerase</fullName>
    </alternativeName>
</protein>
<feature type="chain" id="PRO_0000090194" description="L-erythrulose-1-phosphate isomerase">
    <location>
        <begin position="1"/>
        <end position="256"/>
    </location>
</feature>
<feature type="active site" description="Electrophile" evidence="1">
    <location>
        <position position="96"/>
    </location>
</feature>
<feature type="active site" description="Proton acceptor" evidence="1">
    <location>
        <position position="169"/>
    </location>
</feature>
<feature type="binding site" evidence="1">
    <location>
        <position position="175"/>
    </location>
    <ligand>
        <name>substrate</name>
    </ligand>
</feature>
<feature type="binding site" evidence="1">
    <location>
        <position position="212"/>
    </location>
    <ligand>
        <name>substrate</name>
    </ligand>
</feature>
<sequence>MTKFWIGTSWKMNKTLAEARLFAEALKAADAGRSPDIQRFVIPPFTAVREVKEILSGTSVKVGAQNMHWADQGAWTGEISPLMLKDCNLDIVELGHSERREHFGETNETVGLKVEAAVRHGLIPLICIGETLEDRESGRAAAVLEEEVRGALSKLSEAQKQAEILFAYEPVWAIGENGIPASADYADARQAEIIAVAQSVLARRVPCLYGGSVNPGNCEELIACPHIDGLFIGRSAWNVEGYLDILARCATKVQAN</sequence>
<keyword id="KW-0963">Cytoplasm</keyword>
<keyword id="KW-0312">Gluconeogenesis</keyword>
<keyword id="KW-0324">Glycolysis</keyword>
<keyword id="KW-0413">Isomerase</keyword>
<keyword id="KW-0570">Pentose shunt</keyword>
<reference key="1">
    <citation type="journal article" date="2002" name="Proc. Natl. Acad. Sci. U.S.A.">
        <title>The Brucella suis genome reveals fundamental similarities between animal and plant pathogens and symbionts.</title>
        <authorList>
            <person name="Paulsen I.T."/>
            <person name="Seshadri R."/>
            <person name="Nelson K.E."/>
            <person name="Eisen J.A."/>
            <person name="Heidelberg J.F."/>
            <person name="Read T.D."/>
            <person name="Dodson R.J."/>
            <person name="Umayam L.A."/>
            <person name="Brinkac L.M."/>
            <person name="Beanan M.J."/>
            <person name="Daugherty S.C."/>
            <person name="DeBoy R.T."/>
            <person name="Durkin A.S."/>
            <person name="Kolonay J.F."/>
            <person name="Madupu R."/>
            <person name="Nelson W.C."/>
            <person name="Ayodeji B."/>
            <person name="Kraul M."/>
            <person name="Shetty J."/>
            <person name="Malek J.A."/>
            <person name="Van Aken S.E."/>
            <person name="Riedmuller S."/>
            <person name="Tettelin H."/>
            <person name="Gill S.R."/>
            <person name="White O."/>
            <person name="Salzberg S.L."/>
            <person name="Hoover D.L."/>
            <person name="Lindler L.E."/>
            <person name="Halling S.M."/>
            <person name="Boyle S.M."/>
            <person name="Fraser C.M."/>
        </authorList>
    </citation>
    <scope>NUCLEOTIDE SEQUENCE [LARGE SCALE GENOMIC DNA]</scope>
    <source>
        <strain>1330</strain>
    </source>
</reference>
<reference key="2">
    <citation type="journal article" date="2011" name="J. Bacteriol.">
        <title>Revised genome sequence of Brucella suis 1330.</title>
        <authorList>
            <person name="Tae H."/>
            <person name="Shallom S."/>
            <person name="Settlage R."/>
            <person name="Preston D."/>
            <person name="Adams L.G."/>
            <person name="Garner H.R."/>
        </authorList>
    </citation>
    <scope>NUCLEOTIDE SEQUENCE [LARGE SCALE GENOMIC DNA]</scope>
    <source>
        <strain>1330</strain>
    </source>
</reference>
<organism>
    <name type="scientific">Brucella suis biovar 1 (strain 1330)</name>
    <dbReference type="NCBI Taxonomy" id="204722"/>
    <lineage>
        <taxon>Bacteria</taxon>
        <taxon>Pseudomonadati</taxon>
        <taxon>Pseudomonadota</taxon>
        <taxon>Alphaproteobacteria</taxon>
        <taxon>Hyphomicrobiales</taxon>
        <taxon>Brucellaceae</taxon>
        <taxon>Brucella/Ochrobactrum group</taxon>
        <taxon>Brucella</taxon>
    </lineage>
</organism>
<name>ERYH_BRUSU</name>
<comment type="function">
    <text evidence="2">Catalyzes the isomerization of D-erythrulose-4P to L-erythrulose-1P.</text>
</comment>
<comment type="catalytic activity">
    <reaction evidence="2">
        <text>L-erythrulose 1-phosphate = D-erythrulose 4-phosphate</text>
        <dbReference type="Rhea" id="RHEA:49588"/>
        <dbReference type="ChEBI" id="CHEBI:58002"/>
        <dbReference type="ChEBI" id="CHEBI:90796"/>
        <dbReference type="EC" id="5.3.1.33"/>
    </reaction>
</comment>
<comment type="pathway">
    <text evidence="2">Carbohydrate metabolism; erythritol degradation.</text>
</comment>
<comment type="subunit">
    <text evidence="1">Homodimer.</text>
</comment>
<comment type="subcellular location">
    <subcellularLocation>
        <location evidence="1">Cytoplasm</location>
    </subcellularLocation>
</comment>
<comment type="similarity">
    <text evidence="3">Belongs to the triosephosphate isomerase family.</text>
</comment>
<dbReference type="EC" id="5.3.1.33" evidence="2"/>
<dbReference type="EMBL" id="AE014292">
    <property type="protein sequence ID" value="AAN34042.1"/>
    <property type="molecule type" value="Genomic_DNA"/>
</dbReference>
<dbReference type="EMBL" id="CP002998">
    <property type="protein sequence ID" value="AEM20319.1"/>
    <property type="molecule type" value="Genomic_DNA"/>
</dbReference>
<dbReference type="RefSeq" id="WP_002965777.1">
    <property type="nucleotide sequence ID" value="NZ_KN046805.1"/>
</dbReference>
<dbReference type="SMR" id="Q8FVH2"/>
<dbReference type="KEGG" id="bms:BRA0869"/>
<dbReference type="KEGG" id="bsi:BS1330_II0862"/>
<dbReference type="PATRIC" id="fig|204722.21.peg.440"/>
<dbReference type="HOGENOM" id="CLU_024251_2_3_5"/>
<dbReference type="PhylomeDB" id="Q8FVH2"/>
<dbReference type="UniPathway" id="UPA01066"/>
<dbReference type="Proteomes" id="UP000007104">
    <property type="component" value="Chromosome II"/>
</dbReference>
<dbReference type="GO" id="GO:0005829">
    <property type="term" value="C:cytosol"/>
    <property type="evidence" value="ECO:0007669"/>
    <property type="project" value="TreeGrafter"/>
</dbReference>
<dbReference type="GO" id="GO:0004807">
    <property type="term" value="F:triose-phosphate isomerase activity"/>
    <property type="evidence" value="ECO:0007669"/>
    <property type="project" value="InterPro"/>
</dbReference>
<dbReference type="GO" id="GO:0006094">
    <property type="term" value="P:gluconeogenesis"/>
    <property type="evidence" value="ECO:0007669"/>
    <property type="project" value="UniProtKB-KW"/>
</dbReference>
<dbReference type="GO" id="GO:0046166">
    <property type="term" value="P:glyceraldehyde-3-phosphate biosynthetic process"/>
    <property type="evidence" value="ECO:0007669"/>
    <property type="project" value="TreeGrafter"/>
</dbReference>
<dbReference type="GO" id="GO:0019563">
    <property type="term" value="P:glycerol catabolic process"/>
    <property type="evidence" value="ECO:0007669"/>
    <property type="project" value="TreeGrafter"/>
</dbReference>
<dbReference type="GO" id="GO:0006096">
    <property type="term" value="P:glycolytic process"/>
    <property type="evidence" value="ECO:0007669"/>
    <property type="project" value="UniProtKB-KW"/>
</dbReference>
<dbReference type="GO" id="GO:0006098">
    <property type="term" value="P:pentose-phosphate shunt"/>
    <property type="evidence" value="ECO:0007669"/>
    <property type="project" value="UniProtKB-KW"/>
</dbReference>
<dbReference type="CDD" id="cd00311">
    <property type="entry name" value="TIM"/>
    <property type="match status" value="1"/>
</dbReference>
<dbReference type="Gene3D" id="3.20.20.70">
    <property type="entry name" value="Aldolase class I"/>
    <property type="match status" value="1"/>
</dbReference>
<dbReference type="InterPro" id="IPR013785">
    <property type="entry name" value="Aldolase_TIM"/>
</dbReference>
<dbReference type="InterPro" id="IPR035990">
    <property type="entry name" value="TIM_sf"/>
</dbReference>
<dbReference type="InterPro" id="IPR000652">
    <property type="entry name" value="Triosephosphate_isomerase"/>
</dbReference>
<dbReference type="InterPro" id="IPR020861">
    <property type="entry name" value="Triosephosphate_isomerase_AS"/>
</dbReference>
<dbReference type="NCBIfam" id="NF000722">
    <property type="entry name" value="PRK00042.2-1"/>
    <property type="match status" value="1"/>
</dbReference>
<dbReference type="PANTHER" id="PTHR21139">
    <property type="entry name" value="TRIOSEPHOSPHATE ISOMERASE"/>
    <property type="match status" value="1"/>
</dbReference>
<dbReference type="PANTHER" id="PTHR21139:SF42">
    <property type="entry name" value="TRIOSEPHOSPHATE ISOMERASE"/>
    <property type="match status" value="1"/>
</dbReference>
<dbReference type="Pfam" id="PF00121">
    <property type="entry name" value="TIM"/>
    <property type="match status" value="1"/>
</dbReference>
<dbReference type="SUPFAM" id="SSF51351">
    <property type="entry name" value="Triosephosphate isomerase (TIM)"/>
    <property type="match status" value="1"/>
</dbReference>
<dbReference type="PROSITE" id="PS00171">
    <property type="entry name" value="TIM_1"/>
    <property type="match status" value="1"/>
</dbReference>
<dbReference type="PROSITE" id="PS51440">
    <property type="entry name" value="TIM_2"/>
    <property type="match status" value="1"/>
</dbReference>
<proteinExistence type="inferred from homology"/>
<gene>
    <name evidence="2" type="primary">eryH</name>
    <name type="synonym">tpiA-2</name>
    <name type="ordered locus">BRA0869</name>
    <name type="ordered locus">BS1330_II0862</name>
</gene>
<evidence type="ECO:0000250" key="1">
    <source>
        <dbReference type="UniProtKB" id="P9WG43"/>
    </source>
</evidence>
<evidence type="ECO:0000250" key="2">
    <source>
        <dbReference type="UniProtKB" id="Q2YIQ6"/>
    </source>
</evidence>
<evidence type="ECO:0000305" key="3"/>